<comment type="function">
    <text evidence="1">Activator of cell division through the inhibition of FtsZ GTPase activity, therefore promoting FtsZ assembly into bundles of protofilaments necessary for the formation of the division Z ring. It is recruited early at mid-cell but it is not essential for cell division.</text>
</comment>
<comment type="subunit">
    <text evidence="1">Homodimer. Interacts with FtsZ.</text>
</comment>
<comment type="subcellular location">
    <subcellularLocation>
        <location evidence="1">Cytoplasm</location>
    </subcellularLocation>
    <text evidence="1">Localizes at mid-cell.</text>
</comment>
<comment type="similarity">
    <text evidence="1">Belongs to the ZapA family. Type 1 subfamily.</text>
</comment>
<proteinExistence type="inferred from homology"/>
<accession>B7LPC4</accession>
<keyword id="KW-0131">Cell cycle</keyword>
<keyword id="KW-0132">Cell division</keyword>
<keyword id="KW-0175">Coiled coil</keyword>
<keyword id="KW-0963">Cytoplasm</keyword>
<keyword id="KW-0717">Septation</keyword>
<name>ZAPA_ESCF3</name>
<evidence type="ECO:0000255" key="1">
    <source>
        <dbReference type="HAMAP-Rule" id="MF_02012"/>
    </source>
</evidence>
<feature type="chain" id="PRO_1000189516" description="Cell division protein ZapA">
    <location>
        <begin position="1"/>
        <end position="109"/>
    </location>
</feature>
<feature type="coiled-coil region" evidence="1">
    <location>
        <begin position="21"/>
        <end position="99"/>
    </location>
</feature>
<sequence length="109" mass="12594">MSAQPVDIQIFGRSLRVNCPPDQRDALNQAADDLNQRLQDLKERTRVTNTEQLVFIAALNISYELAQEKAKTRDYAASMEQRIRMLQQTIEQALLEQGRITEKTNQNFE</sequence>
<dbReference type="EMBL" id="CU928158">
    <property type="protein sequence ID" value="CAQ90341.1"/>
    <property type="molecule type" value="Genomic_DNA"/>
</dbReference>
<dbReference type="RefSeq" id="WP_001276008.1">
    <property type="nucleotide sequence ID" value="NC_011740.1"/>
</dbReference>
<dbReference type="SMR" id="B7LPC4"/>
<dbReference type="GeneID" id="93779091"/>
<dbReference type="KEGG" id="efe:EFER_2847"/>
<dbReference type="HOGENOM" id="CLU_116623_3_0_6"/>
<dbReference type="OrthoDB" id="5917174at2"/>
<dbReference type="Proteomes" id="UP000000745">
    <property type="component" value="Chromosome"/>
</dbReference>
<dbReference type="GO" id="GO:0032153">
    <property type="term" value="C:cell division site"/>
    <property type="evidence" value="ECO:0007669"/>
    <property type="project" value="TreeGrafter"/>
</dbReference>
<dbReference type="GO" id="GO:0030428">
    <property type="term" value="C:cell septum"/>
    <property type="evidence" value="ECO:0007669"/>
    <property type="project" value="TreeGrafter"/>
</dbReference>
<dbReference type="GO" id="GO:0005829">
    <property type="term" value="C:cytosol"/>
    <property type="evidence" value="ECO:0007669"/>
    <property type="project" value="TreeGrafter"/>
</dbReference>
<dbReference type="GO" id="GO:0005886">
    <property type="term" value="C:plasma membrane"/>
    <property type="evidence" value="ECO:0007669"/>
    <property type="project" value="UniProtKB-UniRule"/>
</dbReference>
<dbReference type="GO" id="GO:0000917">
    <property type="term" value="P:division septum assembly"/>
    <property type="evidence" value="ECO:0007669"/>
    <property type="project" value="UniProtKB-KW"/>
</dbReference>
<dbReference type="GO" id="GO:0043093">
    <property type="term" value="P:FtsZ-dependent cytokinesis"/>
    <property type="evidence" value="ECO:0007669"/>
    <property type="project" value="TreeGrafter"/>
</dbReference>
<dbReference type="GO" id="GO:0000921">
    <property type="term" value="P:septin ring assembly"/>
    <property type="evidence" value="ECO:0007669"/>
    <property type="project" value="TreeGrafter"/>
</dbReference>
<dbReference type="FunFam" id="1.20.5.50:FF:000001">
    <property type="entry name" value="Cell division protein ZapA"/>
    <property type="match status" value="1"/>
</dbReference>
<dbReference type="FunFam" id="3.30.160.880:FF:000001">
    <property type="entry name" value="Cell division protein ZapA"/>
    <property type="match status" value="1"/>
</dbReference>
<dbReference type="Gene3D" id="1.20.5.50">
    <property type="match status" value="1"/>
</dbReference>
<dbReference type="Gene3D" id="3.30.160.880">
    <property type="entry name" value="Cell division protein ZapA protomer, N-terminal domain"/>
    <property type="match status" value="1"/>
</dbReference>
<dbReference type="HAMAP" id="MF_02012">
    <property type="entry name" value="ZapA_type1"/>
    <property type="match status" value="1"/>
</dbReference>
<dbReference type="InterPro" id="IPR007838">
    <property type="entry name" value="Cell_div_ZapA-like"/>
</dbReference>
<dbReference type="InterPro" id="IPR036192">
    <property type="entry name" value="Cell_div_ZapA-like_sf"/>
</dbReference>
<dbReference type="InterPro" id="IPR023771">
    <property type="entry name" value="Cell_div_ZapA_eubact"/>
</dbReference>
<dbReference type="InterPro" id="IPR042233">
    <property type="entry name" value="Cell_div_ZapA_N"/>
</dbReference>
<dbReference type="NCBIfam" id="NF008209">
    <property type="entry name" value="PRK10972.1"/>
    <property type="match status" value="1"/>
</dbReference>
<dbReference type="PANTHER" id="PTHR34981">
    <property type="entry name" value="CELL DIVISION PROTEIN ZAPA"/>
    <property type="match status" value="1"/>
</dbReference>
<dbReference type="PANTHER" id="PTHR34981:SF1">
    <property type="entry name" value="CELL DIVISION PROTEIN ZAPA"/>
    <property type="match status" value="1"/>
</dbReference>
<dbReference type="Pfam" id="PF05164">
    <property type="entry name" value="ZapA"/>
    <property type="match status" value="1"/>
</dbReference>
<dbReference type="SUPFAM" id="SSF102829">
    <property type="entry name" value="Cell division protein ZapA-like"/>
    <property type="match status" value="1"/>
</dbReference>
<protein>
    <recommendedName>
        <fullName evidence="1">Cell division protein ZapA</fullName>
    </recommendedName>
    <alternativeName>
        <fullName evidence="1">Z ring-associated protein ZapA</fullName>
    </alternativeName>
</protein>
<organism>
    <name type="scientific">Escherichia fergusonii (strain ATCC 35469 / DSM 13698 / CCUG 18766 / IAM 14443 / JCM 21226 / LMG 7866 / NBRC 102419 / NCTC 12128 / CDC 0568-73)</name>
    <dbReference type="NCBI Taxonomy" id="585054"/>
    <lineage>
        <taxon>Bacteria</taxon>
        <taxon>Pseudomonadati</taxon>
        <taxon>Pseudomonadota</taxon>
        <taxon>Gammaproteobacteria</taxon>
        <taxon>Enterobacterales</taxon>
        <taxon>Enterobacteriaceae</taxon>
        <taxon>Escherichia</taxon>
    </lineage>
</organism>
<reference key="1">
    <citation type="journal article" date="2009" name="PLoS Genet.">
        <title>Organised genome dynamics in the Escherichia coli species results in highly diverse adaptive paths.</title>
        <authorList>
            <person name="Touchon M."/>
            <person name="Hoede C."/>
            <person name="Tenaillon O."/>
            <person name="Barbe V."/>
            <person name="Baeriswyl S."/>
            <person name="Bidet P."/>
            <person name="Bingen E."/>
            <person name="Bonacorsi S."/>
            <person name="Bouchier C."/>
            <person name="Bouvet O."/>
            <person name="Calteau A."/>
            <person name="Chiapello H."/>
            <person name="Clermont O."/>
            <person name="Cruveiller S."/>
            <person name="Danchin A."/>
            <person name="Diard M."/>
            <person name="Dossat C."/>
            <person name="Karoui M.E."/>
            <person name="Frapy E."/>
            <person name="Garry L."/>
            <person name="Ghigo J.M."/>
            <person name="Gilles A.M."/>
            <person name="Johnson J."/>
            <person name="Le Bouguenec C."/>
            <person name="Lescat M."/>
            <person name="Mangenot S."/>
            <person name="Martinez-Jehanne V."/>
            <person name="Matic I."/>
            <person name="Nassif X."/>
            <person name="Oztas S."/>
            <person name="Petit M.A."/>
            <person name="Pichon C."/>
            <person name="Rouy Z."/>
            <person name="Ruf C.S."/>
            <person name="Schneider D."/>
            <person name="Tourret J."/>
            <person name="Vacherie B."/>
            <person name="Vallenet D."/>
            <person name="Medigue C."/>
            <person name="Rocha E.P.C."/>
            <person name="Denamur E."/>
        </authorList>
    </citation>
    <scope>NUCLEOTIDE SEQUENCE [LARGE SCALE GENOMIC DNA]</scope>
    <source>
        <strain>ATCC 35469 / DSM 13698 / BCRC 15582 / CCUG 18766 / IAM 14443 / JCM 21226 / LMG 7866 / NBRC 102419 / NCTC 12128 / CDC 0568-73</strain>
    </source>
</reference>
<gene>
    <name evidence="1" type="primary">zapA</name>
    <name type="ordered locus">EFER_2847</name>
</gene>